<name>ZNUC_SHIBS</name>
<accession>Q322E8</accession>
<keyword id="KW-0067">ATP-binding</keyword>
<keyword id="KW-0997">Cell inner membrane</keyword>
<keyword id="KW-1003">Cell membrane</keyword>
<keyword id="KW-0406">Ion transport</keyword>
<keyword id="KW-0472">Membrane</keyword>
<keyword id="KW-0547">Nucleotide-binding</keyword>
<keyword id="KW-1278">Translocase</keyword>
<keyword id="KW-0813">Transport</keyword>
<keyword id="KW-0862">Zinc</keyword>
<keyword id="KW-0864">Zinc transport</keyword>
<protein>
    <recommendedName>
        <fullName evidence="1">Zinc import ATP-binding protein ZnuC</fullName>
        <ecNumber evidence="1">7.2.2.20</ecNumber>
    </recommendedName>
</protein>
<evidence type="ECO:0000255" key="1">
    <source>
        <dbReference type="HAMAP-Rule" id="MF_01725"/>
    </source>
</evidence>
<proteinExistence type="inferred from homology"/>
<sequence>MTSLVSLENVSVSFGQRRVLSDVSLELKPGKILTLLGPNGAGKSTLVRVVLGLVTPDEGVIKRNGKLRIGYVPQKLYLDTTLPLTVNRFLRLRPGTHKEDILPALKRVQAGHLINAPMQKLSGGETQRVLLARALLNRPQLLVLDEPTQGVDVNGQVALYDLIDQLRRELDCGVLMVSHDLHLVMAKTDEVLCLNHHICCSGTPEVVSLHPEFISMFGPRGAEQLGIYRHHHNHRHDLQGRIVLRRGNDRS</sequence>
<organism>
    <name type="scientific">Shigella boydii serotype 4 (strain Sb227)</name>
    <dbReference type="NCBI Taxonomy" id="300268"/>
    <lineage>
        <taxon>Bacteria</taxon>
        <taxon>Pseudomonadati</taxon>
        <taxon>Pseudomonadota</taxon>
        <taxon>Gammaproteobacteria</taxon>
        <taxon>Enterobacterales</taxon>
        <taxon>Enterobacteriaceae</taxon>
        <taxon>Shigella</taxon>
    </lineage>
</organism>
<gene>
    <name evidence="1" type="primary">znuC</name>
    <name type="ordered locus">SBO_1175</name>
</gene>
<comment type="function">
    <text evidence="1">Part of the ABC transporter complex ZnuABC involved in zinc import. Responsible for energy coupling to the transport system.</text>
</comment>
<comment type="catalytic activity">
    <reaction evidence="1">
        <text>Zn(2+)(out) + ATP(in) + H2O(in) = Zn(2+)(in) + ADP(in) + phosphate(in) + H(+)(in)</text>
        <dbReference type="Rhea" id="RHEA:29795"/>
        <dbReference type="ChEBI" id="CHEBI:15377"/>
        <dbReference type="ChEBI" id="CHEBI:15378"/>
        <dbReference type="ChEBI" id="CHEBI:29105"/>
        <dbReference type="ChEBI" id="CHEBI:30616"/>
        <dbReference type="ChEBI" id="CHEBI:43474"/>
        <dbReference type="ChEBI" id="CHEBI:456216"/>
        <dbReference type="EC" id="7.2.2.20"/>
    </reaction>
</comment>
<comment type="subunit">
    <text evidence="1">The complex is composed of two ATP-binding proteins (ZnuC), two transmembrane proteins (ZnuB) and a solute-binding protein (ZnuA).</text>
</comment>
<comment type="subcellular location">
    <subcellularLocation>
        <location evidence="1">Cell inner membrane</location>
        <topology evidence="1">Peripheral membrane protein</topology>
    </subcellularLocation>
</comment>
<comment type="similarity">
    <text evidence="1">Belongs to the ABC transporter superfamily. Zinc importer (TC 3.A.1.15.5) family.</text>
</comment>
<feature type="chain" id="PRO_0000281550" description="Zinc import ATP-binding protein ZnuC">
    <location>
        <begin position="1"/>
        <end position="251"/>
    </location>
</feature>
<feature type="domain" description="ABC transporter" evidence="1">
    <location>
        <begin position="5"/>
        <end position="220"/>
    </location>
</feature>
<feature type="binding site" evidence="1">
    <location>
        <begin position="37"/>
        <end position="44"/>
    </location>
    <ligand>
        <name>ATP</name>
        <dbReference type="ChEBI" id="CHEBI:30616"/>
    </ligand>
</feature>
<reference key="1">
    <citation type="journal article" date="2005" name="Nucleic Acids Res.">
        <title>Genome dynamics and diversity of Shigella species, the etiologic agents of bacillary dysentery.</title>
        <authorList>
            <person name="Yang F."/>
            <person name="Yang J."/>
            <person name="Zhang X."/>
            <person name="Chen L."/>
            <person name="Jiang Y."/>
            <person name="Yan Y."/>
            <person name="Tang X."/>
            <person name="Wang J."/>
            <person name="Xiong Z."/>
            <person name="Dong J."/>
            <person name="Xue Y."/>
            <person name="Zhu Y."/>
            <person name="Xu X."/>
            <person name="Sun L."/>
            <person name="Chen S."/>
            <person name="Nie H."/>
            <person name="Peng J."/>
            <person name="Xu J."/>
            <person name="Wang Y."/>
            <person name="Yuan Z."/>
            <person name="Wen Y."/>
            <person name="Yao Z."/>
            <person name="Shen Y."/>
            <person name="Qiang B."/>
            <person name="Hou Y."/>
            <person name="Yu J."/>
            <person name="Jin Q."/>
        </authorList>
    </citation>
    <scope>NUCLEOTIDE SEQUENCE [LARGE SCALE GENOMIC DNA]</scope>
    <source>
        <strain>Sb227</strain>
    </source>
</reference>
<dbReference type="EC" id="7.2.2.20" evidence="1"/>
<dbReference type="EMBL" id="CP000036">
    <property type="protein sequence ID" value="ABB65810.1"/>
    <property type="molecule type" value="Genomic_DNA"/>
</dbReference>
<dbReference type="RefSeq" id="WP_000202996.1">
    <property type="nucleotide sequence ID" value="NC_007613.1"/>
</dbReference>
<dbReference type="SMR" id="Q322E8"/>
<dbReference type="GeneID" id="93776132"/>
<dbReference type="KEGG" id="sbo:SBO_1175"/>
<dbReference type="HOGENOM" id="CLU_000604_1_11_6"/>
<dbReference type="Proteomes" id="UP000007067">
    <property type="component" value="Chromosome"/>
</dbReference>
<dbReference type="GO" id="GO:0005886">
    <property type="term" value="C:plasma membrane"/>
    <property type="evidence" value="ECO:0007669"/>
    <property type="project" value="UniProtKB-SubCell"/>
</dbReference>
<dbReference type="GO" id="GO:0015633">
    <property type="term" value="F:ABC-type zinc transporter activity"/>
    <property type="evidence" value="ECO:0007669"/>
    <property type="project" value="UniProtKB-EC"/>
</dbReference>
<dbReference type="GO" id="GO:0005524">
    <property type="term" value="F:ATP binding"/>
    <property type="evidence" value="ECO:0007669"/>
    <property type="project" value="UniProtKB-KW"/>
</dbReference>
<dbReference type="GO" id="GO:0016887">
    <property type="term" value="F:ATP hydrolysis activity"/>
    <property type="evidence" value="ECO:0007669"/>
    <property type="project" value="InterPro"/>
</dbReference>
<dbReference type="GO" id="GO:0010043">
    <property type="term" value="P:response to zinc ion"/>
    <property type="evidence" value="ECO:0007669"/>
    <property type="project" value="TreeGrafter"/>
</dbReference>
<dbReference type="CDD" id="cd03235">
    <property type="entry name" value="ABC_Metallic_Cations"/>
    <property type="match status" value="1"/>
</dbReference>
<dbReference type="FunFam" id="3.40.50.300:FF:000392">
    <property type="entry name" value="Zinc import ATP-binding protein ZnuC"/>
    <property type="match status" value="1"/>
</dbReference>
<dbReference type="Gene3D" id="3.40.50.300">
    <property type="entry name" value="P-loop containing nucleotide triphosphate hydrolases"/>
    <property type="match status" value="1"/>
</dbReference>
<dbReference type="InterPro" id="IPR003593">
    <property type="entry name" value="AAA+_ATPase"/>
</dbReference>
<dbReference type="InterPro" id="IPR003439">
    <property type="entry name" value="ABC_transporter-like_ATP-bd"/>
</dbReference>
<dbReference type="InterPro" id="IPR050153">
    <property type="entry name" value="Metal_Ion_Import_ABC"/>
</dbReference>
<dbReference type="InterPro" id="IPR027417">
    <property type="entry name" value="P-loop_NTPase"/>
</dbReference>
<dbReference type="NCBIfam" id="NF007090">
    <property type="entry name" value="PRK09544.1"/>
    <property type="match status" value="1"/>
</dbReference>
<dbReference type="PANTHER" id="PTHR42734">
    <property type="entry name" value="METAL TRANSPORT SYSTEM ATP-BINDING PROTEIN TM_0124-RELATED"/>
    <property type="match status" value="1"/>
</dbReference>
<dbReference type="PANTHER" id="PTHR42734:SF9">
    <property type="entry name" value="ZINC IMPORT ATP-BINDING PROTEIN ZNUC"/>
    <property type="match status" value="1"/>
</dbReference>
<dbReference type="Pfam" id="PF00005">
    <property type="entry name" value="ABC_tran"/>
    <property type="match status" value="1"/>
</dbReference>
<dbReference type="SMART" id="SM00382">
    <property type="entry name" value="AAA"/>
    <property type="match status" value="1"/>
</dbReference>
<dbReference type="SUPFAM" id="SSF52540">
    <property type="entry name" value="P-loop containing nucleoside triphosphate hydrolases"/>
    <property type="match status" value="1"/>
</dbReference>
<dbReference type="PROSITE" id="PS50893">
    <property type="entry name" value="ABC_TRANSPORTER_2"/>
    <property type="match status" value="1"/>
</dbReference>
<dbReference type="PROSITE" id="PS51298">
    <property type="entry name" value="ZNUC"/>
    <property type="match status" value="1"/>
</dbReference>